<sequence>MSQWYELQQLDSKFLEQVHQLYDDSFPMEIRQYLAQWLENQDWEHAANDVSFATIRFHDLLSQLDDQYSRFSLENNFLLQHNIRKSKRNLQDNFQEDPIQMSMIICNCLKEERKILENAQRFNQTQSGNIQSTVMLDKHKELDSKVRNVKDKVMCIEHEIKTLEDLQDEYDFKCKTLQNREHDTNGVAKNDQKQEQMLLQKMYLMLDNKRKEVVHKIIELLNVTELTQKALINDELVEWKRRQQSACIGGPPNACLDQLQNWFTIVAESLQQVRQQLKKLEELEQKYTYEHDPITKNKQALWDRTFSLFQQLIQSSFVVERQPCMPTHPQRPLVLKTGVQFTVKLRLLVKLQELNYNLKVKVLFDKDVSERNTVKGFRKFNILGTHTKVMNMEESTNGSLAAEFRHLQLKEQKNAGARTNEGPLIVTEELHSLSFETQLCQPGLVIDLETTSLPVVVISNVSQLPSGWASILWYNMLVAEPRNLSFFLNPPCARWSQLSEVLSWQFSSVTKRGLNVDQLNMLGEKLLGPTAGPDGLIPWTRFCKENINDKNFPFWLWIESILELIKKHLLSLWNDGCIVGFISKERERALLKDQQPGTFLLRFSESCREGAITFTWVERSQNGGEPYFHAVEPYTKKELSAVTFPDIIRNYKVMAAENIPENPLKYLYPNIDKDHAFGKYYSRPKEAPEPMELDGPKGTGYIKTELISVSEVHPSRLQTTDNLLPMSPEEFDEVSRMVGPVEFDMVSMTRGRS</sequence>
<protein>
    <recommendedName>
        <fullName>Signal transducer and activator of transcription 1</fullName>
    </recommendedName>
</protein>
<proteinExistence type="evidence at protein level"/>
<evidence type="ECO:0000250" key="1">
    <source>
        <dbReference type="UniProtKB" id="P42224"/>
    </source>
</evidence>
<evidence type="ECO:0000250" key="2">
    <source>
        <dbReference type="UniProtKB" id="P42225"/>
    </source>
</evidence>
<evidence type="ECO:0000255" key="3">
    <source>
        <dbReference type="PROSITE-ProRule" id="PRU00191"/>
    </source>
</evidence>
<evidence type="ECO:0000269" key="4">
    <source>
    </source>
</evidence>
<evidence type="ECO:0000305" key="5"/>
<reference key="1">
    <citation type="journal article" date="2004" name="Nucleic Acids Res.">
        <title>PEDE (Pig EST Data Explorer): construction of a database for ESTs derived from porcine full-length cDNA libraries.</title>
        <authorList>
            <person name="Uenishi H."/>
            <person name="Eguchi T."/>
            <person name="Suzuki K."/>
            <person name="Sawazaki T."/>
            <person name="Toki D."/>
            <person name="Shinkai H."/>
            <person name="Okumura N."/>
            <person name="Hamasima N."/>
            <person name="Awata T."/>
        </authorList>
    </citation>
    <scope>NUCLEOTIDE SEQUENCE [LARGE SCALE MRNA]</scope>
</reference>
<reference key="2">
    <citation type="submission" date="2009-11" db="EMBL/GenBank/DDBJ databases">
        <authorList>
            <consortium name="Porcine genome sequencing project"/>
        </authorList>
    </citation>
    <scope>NUCLEOTIDE SEQUENCE [LARGE SCALE GENOMIC DNA]</scope>
    <source>
        <strain>Duroc</strain>
    </source>
</reference>
<reference key="3">
    <citation type="journal article" date="2022" name="MBio">
        <title>MGF360-9L Is a Major Virulence Factor Associated with the African Swine Fever Virus by Antagonizing the JAK/STAT Signaling Pathway.</title>
        <authorList>
            <person name="Zhang K."/>
            <person name="Yang B."/>
            <person name="Shen C."/>
            <person name="Zhang T."/>
            <person name="Hao Y."/>
            <person name="Zhang D."/>
            <person name="Liu H."/>
            <person name="Shi X."/>
            <person name="Li G."/>
            <person name="Yang J."/>
            <person name="Li D."/>
            <person name="Zhu Z."/>
            <person name="Tian H."/>
            <person name="Yang F."/>
            <person name="Ru Y."/>
            <person name="Cao W.J."/>
            <person name="Guo J."/>
            <person name="He J."/>
            <person name="Zheng H."/>
            <person name="Liu X."/>
        </authorList>
    </citation>
    <scope>INTERACTION WITH AFRICAN SWINE FEVER VIRUS PROTEIN MGF360-9L (MICROBIAL INFECTION)</scope>
    <scope>SUBCELLULAR LOCATION</scope>
</reference>
<dbReference type="EMBL" id="AB116564">
    <property type="protein sequence ID" value="BAD06318.1"/>
    <property type="molecule type" value="mRNA"/>
</dbReference>
<dbReference type="RefSeq" id="NP_998934.1">
    <property type="nucleotide sequence ID" value="NM_213769.1"/>
</dbReference>
<dbReference type="SMR" id="Q764M5"/>
<dbReference type="FunCoup" id="Q764M5">
    <property type="interactions" value="556"/>
</dbReference>
<dbReference type="STRING" id="9823.ENSSSCP00000033087"/>
<dbReference type="GlyGen" id="Q764M5">
    <property type="glycosylation" value="1 site"/>
</dbReference>
<dbReference type="iPTMnet" id="Q764M5"/>
<dbReference type="PaxDb" id="9823-ENSSSCP00000017010"/>
<dbReference type="PeptideAtlas" id="Q764M5"/>
<dbReference type="Ensembl" id="ENSSSCT00000064095.3">
    <property type="protein sequence ID" value="ENSSSCP00000056805.1"/>
    <property type="gene ID" value="ENSSSCG00000016057.5"/>
</dbReference>
<dbReference type="GeneID" id="396655"/>
<dbReference type="KEGG" id="ssc:396655"/>
<dbReference type="CTD" id="6772"/>
<dbReference type="VGNC" id="VGNC:95523">
    <property type="gene designation" value="STAT1"/>
</dbReference>
<dbReference type="eggNOG" id="KOG3667">
    <property type="taxonomic scope" value="Eukaryota"/>
</dbReference>
<dbReference type="GeneTree" id="ENSGT01050000244905"/>
<dbReference type="InParanoid" id="Q764M5"/>
<dbReference type="OrthoDB" id="19300at2759"/>
<dbReference type="Proteomes" id="UP000008227">
    <property type="component" value="Chromosome 15"/>
</dbReference>
<dbReference type="Proteomes" id="UP000314985">
    <property type="component" value="Unplaced"/>
</dbReference>
<dbReference type="Proteomes" id="UP000694570">
    <property type="component" value="Unplaced"/>
</dbReference>
<dbReference type="Proteomes" id="UP000694571">
    <property type="component" value="Unplaced"/>
</dbReference>
<dbReference type="Proteomes" id="UP000694720">
    <property type="component" value="Unplaced"/>
</dbReference>
<dbReference type="Proteomes" id="UP000694722">
    <property type="component" value="Unplaced"/>
</dbReference>
<dbReference type="Proteomes" id="UP000694723">
    <property type="component" value="Unplaced"/>
</dbReference>
<dbReference type="Proteomes" id="UP000694724">
    <property type="component" value="Unplaced"/>
</dbReference>
<dbReference type="Proteomes" id="UP000694725">
    <property type="component" value="Unplaced"/>
</dbReference>
<dbReference type="Proteomes" id="UP000694726">
    <property type="component" value="Unplaced"/>
</dbReference>
<dbReference type="Proteomes" id="UP000694727">
    <property type="component" value="Unplaced"/>
</dbReference>
<dbReference type="Proteomes" id="UP000694728">
    <property type="component" value="Unplaced"/>
</dbReference>
<dbReference type="Bgee" id="ENSSSCG00000016057">
    <property type="expression patterns" value="Expressed in caecum and 42 other cell types or tissues"/>
</dbReference>
<dbReference type="GO" id="GO:0005737">
    <property type="term" value="C:cytoplasm"/>
    <property type="evidence" value="ECO:0000250"/>
    <property type="project" value="UniProtKB"/>
</dbReference>
<dbReference type="GO" id="GO:0070721">
    <property type="term" value="C:ISGF3 complex"/>
    <property type="evidence" value="ECO:0000318"/>
    <property type="project" value="GO_Central"/>
</dbReference>
<dbReference type="GO" id="GO:0005730">
    <property type="term" value="C:nucleolus"/>
    <property type="evidence" value="ECO:0000250"/>
    <property type="project" value="UniProtKB"/>
</dbReference>
<dbReference type="GO" id="GO:0005634">
    <property type="term" value="C:nucleus"/>
    <property type="evidence" value="ECO:0000250"/>
    <property type="project" value="UniProtKB"/>
</dbReference>
<dbReference type="GO" id="GO:0000981">
    <property type="term" value="F:DNA-binding transcription factor activity, RNA polymerase II-specific"/>
    <property type="evidence" value="ECO:0000250"/>
    <property type="project" value="UniProtKB"/>
</dbReference>
<dbReference type="GO" id="GO:0042803">
    <property type="term" value="F:protein homodimerization activity"/>
    <property type="evidence" value="ECO:0000250"/>
    <property type="project" value="UniProtKB"/>
</dbReference>
<dbReference type="GO" id="GO:0000978">
    <property type="term" value="F:RNA polymerase II cis-regulatory region sequence-specific DNA binding"/>
    <property type="evidence" value="ECO:0000318"/>
    <property type="project" value="GO_Central"/>
</dbReference>
<dbReference type="GO" id="GO:0000979">
    <property type="term" value="F:RNA polymerase II core promoter sequence-specific DNA binding"/>
    <property type="evidence" value="ECO:0000250"/>
    <property type="project" value="UniProtKB"/>
</dbReference>
<dbReference type="GO" id="GO:0008015">
    <property type="term" value="P:blood circulation"/>
    <property type="evidence" value="ECO:0000250"/>
    <property type="project" value="UniProtKB"/>
</dbReference>
<dbReference type="GO" id="GO:0007259">
    <property type="term" value="P:cell surface receptor signaling pathway via JAK-STAT"/>
    <property type="evidence" value="ECO:0000250"/>
    <property type="project" value="UniProtKB"/>
</dbReference>
<dbReference type="GO" id="GO:0032869">
    <property type="term" value="P:cellular response to insulin stimulus"/>
    <property type="evidence" value="ECO:0000250"/>
    <property type="project" value="UniProtKB"/>
</dbReference>
<dbReference type="GO" id="GO:0006952">
    <property type="term" value="P:defense response"/>
    <property type="evidence" value="ECO:0000318"/>
    <property type="project" value="GO_Central"/>
</dbReference>
<dbReference type="GO" id="GO:0051607">
    <property type="term" value="P:defense response to virus"/>
    <property type="evidence" value="ECO:0000250"/>
    <property type="project" value="UniProtKB"/>
</dbReference>
<dbReference type="GO" id="GO:0072162">
    <property type="term" value="P:metanephric mesenchymal cell differentiation"/>
    <property type="evidence" value="ECO:0000250"/>
    <property type="project" value="UniProtKB"/>
</dbReference>
<dbReference type="GO" id="GO:0072136">
    <property type="term" value="P:metanephric mesenchymal cell proliferation involved in metanephros development"/>
    <property type="evidence" value="ECO:0000250"/>
    <property type="project" value="UniProtKB"/>
</dbReference>
<dbReference type="GO" id="GO:0016525">
    <property type="term" value="P:negative regulation of angiogenesis"/>
    <property type="evidence" value="ECO:0000250"/>
    <property type="project" value="UniProtKB"/>
</dbReference>
<dbReference type="GO" id="GO:0043124">
    <property type="term" value="P:negative regulation of canonical NF-kappaB signal transduction"/>
    <property type="evidence" value="ECO:0000250"/>
    <property type="project" value="UniProtKB"/>
</dbReference>
<dbReference type="GO" id="GO:0001937">
    <property type="term" value="P:negative regulation of endothelial cell proliferation"/>
    <property type="evidence" value="ECO:0000250"/>
    <property type="project" value="UniProtKB"/>
</dbReference>
<dbReference type="GO" id="GO:0072308">
    <property type="term" value="P:negative regulation of metanephric nephron tubule epithelial cell differentiation"/>
    <property type="evidence" value="ECO:0000250"/>
    <property type="project" value="UniProtKB"/>
</dbReference>
<dbReference type="GO" id="GO:0043065">
    <property type="term" value="P:positive regulation of apoptotic process"/>
    <property type="evidence" value="ECO:0000250"/>
    <property type="project" value="UniProtKB"/>
</dbReference>
<dbReference type="GO" id="GO:0008284">
    <property type="term" value="P:positive regulation of cell population proliferation"/>
    <property type="evidence" value="ECO:0000250"/>
    <property type="project" value="UniProtKB"/>
</dbReference>
<dbReference type="GO" id="GO:0045893">
    <property type="term" value="P:positive regulation of DNA-templated transcription"/>
    <property type="evidence" value="ECO:0000250"/>
    <property type="project" value="UniProtKB"/>
</dbReference>
<dbReference type="GO" id="GO:0045648">
    <property type="term" value="P:positive regulation of erythrocyte differentiation"/>
    <property type="evidence" value="ECO:0000250"/>
    <property type="project" value="UniProtKB"/>
</dbReference>
<dbReference type="GO" id="GO:0032727">
    <property type="term" value="P:positive regulation of interferon-alpha production"/>
    <property type="evidence" value="ECO:0000250"/>
    <property type="project" value="UniProtKB"/>
</dbReference>
<dbReference type="GO" id="GO:0048661">
    <property type="term" value="P:positive regulation of smooth muscle cell proliferation"/>
    <property type="evidence" value="ECO:0000250"/>
    <property type="project" value="UniProtKB"/>
</dbReference>
<dbReference type="GO" id="GO:0045944">
    <property type="term" value="P:positive regulation of transcription by RNA polymerase II"/>
    <property type="evidence" value="ECO:0000250"/>
    <property type="project" value="UniProtKB"/>
</dbReference>
<dbReference type="GO" id="GO:0042127">
    <property type="term" value="P:regulation of cell population proliferation"/>
    <property type="evidence" value="ECO:0000318"/>
    <property type="project" value="GO_Central"/>
</dbReference>
<dbReference type="GO" id="GO:0006357">
    <property type="term" value="P:regulation of transcription by RNA polymerase II"/>
    <property type="evidence" value="ECO:0000318"/>
    <property type="project" value="GO_Central"/>
</dbReference>
<dbReference type="GO" id="GO:0051591">
    <property type="term" value="P:response to cAMP"/>
    <property type="evidence" value="ECO:0000250"/>
    <property type="project" value="UniProtKB"/>
</dbReference>
<dbReference type="GO" id="GO:0034097">
    <property type="term" value="P:response to cytokine"/>
    <property type="evidence" value="ECO:0000250"/>
    <property type="project" value="UniProtKB"/>
</dbReference>
<dbReference type="GO" id="GO:0007584">
    <property type="term" value="P:response to nutrient"/>
    <property type="evidence" value="ECO:0000250"/>
    <property type="project" value="UniProtKB"/>
</dbReference>
<dbReference type="GO" id="GO:0043434">
    <property type="term" value="P:response to peptide hormone"/>
    <property type="evidence" value="ECO:0000250"/>
    <property type="project" value="UniProtKB"/>
</dbReference>
<dbReference type="GO" id="GO:0034341">
    <property type="term" value="P:response to type II interferon"/>
    <property type="evidence" value="ECO:0000250"/>
    <property type="project" value="UniProtKB"/>
</dbReference>
<dbReference type="GO" id="GO:0033209">
    <property type="term" value="P:tumor necrosis factor-mediated signaling pathway"/>
    <property type="evidence" value="ECO:0000250"/>
    <property type="project" value="UniProtKB"/>
</dbReference>
<dbReference type="GO" id="GO:0060337">
    <property type="term" value="P:type I interferon-mediated signaling pathway"/>
    <property type="evidence" value="ECO:0000250"/>
    <property type="project" value="UniProtKB"/>
</dbReference>
<dbReference type="GO" id="GO:0060333">
    <property type="term" value="P:type II interferon-mediated signaling pathway"/>
    <property type="evidence" value="ECO:0000250"/>
    <property type="project" value="UniProtKB"/>
</dbReference>
<dbReference type="CDD" id="cd10372">
    <property type="entry name" value="SH2_STAT1"/>
    <property type="match status" value="1"/>
</dbReference>
<dbReference type="CDD" id="cd16851">
    <property type="entry name" value="STAT1_CCD"/>
    <property type="match status" value="1"/>
</dbReference>
<dbReference type="CDD" id="cd16845">
    <property type="entry name" value="STAT1_DBD"/>
    <property type="match status" value="1"/>
</dbReference>
<dbReference type="FunFam" id="1.10.238.10:FF:000012">
    <property type="entry name" value="Signal transducer and activator of transcription"/>
    <property type="match status" value="1"/>
</dbReference>
<dbReference type="FunFam" id="1.10.532.10:FF:000001">
    <property type="entry name" value="Signal transducer and activator of transcription"/>
    <property type="match status" value="1"/>
</dbReference>
<dbReference type="FunFam" id="1.20.1050.20:FF:000001">
    <property type="entry name" value="Signal transducer and activator of transcription"/>
    <property type="match status" value="1"/>
</dbReference>
<dbReference type="FunFam" id="2.60.40.630:FF:000001">
    <property type="entry name" value="Signal transducer and activator of transcription"/>
    <property type="match status" value="1"/>
</dbReference>
<dbReference type="FunFam" id="3.30.505.10:FF:000003">
    <property type="entry name" value="Signal transducer and activator of transcription"/>
    <property type="match status" value="1"/>
</dbReference>
<dbReference type="FunFam" id="6.10.250.3310:FF:000001">
    <property type="entry name" value="Signal transducer and activator of transcription"/>
    <property type="match status" value="1"/>
</dbReference>
<dbReference type="Gene3D" id="1.10.238.10">
    <property type="entry name" value="EF-hand"/>
    <property type="match status" value="1"/>
</dbReference>
<dbReference type="Gene3D" id="3.30.505.10">
    <property type="entry name" value="SH2 domain"/>
    <property type="match status" value="1"/>
</dbReference>
<dbReference type="Gene3D" id="6.10.250.3310">
    <property type="entry name" value="signal transducer and activator of transcription 1"/>
    <property type="match status" value="1"/>
</dbReference>
<dbReference type="Gene3D" id="1.20.1050.20">
    <property type="entry name" value="STAT transcription factor, all-alpha domain"/>
    <property type="match status" value="1"/>
</dbReference>
<dbReference type="Gene3D" id="2.60.40.630">
    <property type="entry name" value="STAT transcription factor, DNA-binding domain"/>
    <property type="match status" value="1"/>
</dbReference>
<dbReference type="Gene3D" id="1.10.532.10">
    <property type="entry name" value="STAT transcription factor, N-terminal domain"/>
    <property type="match status" value="1"/>
</dbReference>
<dbReference type="InterPro" id="IPR008967">
    <property type="entry name" value="p53-like_TF_DNA-bd_sf"/>
</dbReference>
<dbReference type="InterPro" id="IPR000980">
    <property type="entry name" value="SH2"/>
</dbReference>
<dbReference type="InterPro" id="IPR036860">
    <property type="entry name" value="SH2_dom_sf"/>
</dbReference>
<dbReference type="InterPro" id="IPR001217">
    <property type="entry name" value="STAT"/>
</dbReference>
<dbReference type="InterPro" id="IPR038295">
    <property type="entry name" value="STAT1_C_sf"/>
</dbReference>
<dbReference type="InterPro" id="IPR035859">
    <property type="entry name" value="STAT1_SH2"/>
</dbReference>
<dbReference type="InterPro" id="IPR022752">
    <property type="entry name" value="STAT1_TAZ2-bd_C"/>
</dbReference>
<dbReference type="InterPro" id="IPR048988">
    <property type="entry name" value="STAT_linker"/>
</dbReference>
<dbReference type="InterPro" id="IPR036535">
    <property type="entry name" value="STAT_N_sf"/>
</dbReference>
<dbReference type="InterPro" id="IPR013800">
    <property type="entry name" value="STAT_TF_alpha"/>
</dbReference>
<dbReference type="InterPro" id="IPR015988">
    <property type="entry name" value="STAT_TF_coiled-coil"/>
</dbReference>
<dbReference type="InterPro" id="IPR013801">
    <property type="entry name" value="STAT_TF_DNA-bd"/>
</dbReference>
<dbReference type="InterPro" id="IPR012345">
    <property type="entry name" value="STAT_TF_DNA-bd_N"/>
</dbReference>
<dbReference type="InterPro" id="IPR013799">
    <property type="entry name" value="STAT_TF_prot_interaction"/>
</dbReference>
<dbReference type="PANTHER" id="PTHR11801">
    <property type="entry name" value="SIGNAL TRANSDUCER AND ACTIVATOR OF TRANSCRIPTION"/>
    <property type="match status" value="1"/>
</dbReference>
<dbReference type="Pfam" id="PF00017">
    <property type="entry name" value="SH2"/>
    <property type="match status" value="1"/>
</dbReference>
<dbReference type="Pfam" id="PF12162">
    <property type="entry name" value="STAT1_TAZ2bind"/>
    <property type="match status" value="1"/>
</dbReference>
<dbReference type="Pfam" id="PF01017">
    <property type="entry name" value="STAT_alpha"/>
    <property type="match status" value="1"/>
</dbReference>
<dbReference type="Pfam" id="PF02864">
    <property type="entry name" value="STAT_bind"/>
    <property type="match status" value="1"/>
</dbReference>
<dbReference type="Pfam" id="PF02865">
    <property type="entry name" value="STAT_int"/>
    <property type="match status" value="1"/>
</dbReference>
<dbReference type="Pfam" id="PF21354">
    <property type="entry name" value="STAT_linker"/>
    <property type="match status" value="1"/>
</dbReference>
<dbReference type="SMART" id="SM00964">
    <property type="entry name" value="STAT_int"/>
    <property type="match status" value="1"/>
</dbReference>
<dbReference type="SUPFAM" id="SSF49417">
    <property type="entry name" value="p53-like transcription factors"/>
    <property type="match status" value="1"/>
</dbReference>
<dbReference type="SUPFAM" id="SSF55550">
    <property type="entry name" value="SH2 domain"/>
    <property type="match status" value="1"/>
</dbReference>
<dbReference type="SUPFAM" id="SSF47655">
    <property type="entry name" value="STAT"/>
    <property type="match status" value="1"/>
</dbReference>
<dbReference type="SUPFAM" id="SSF48092">
    <property type="entry name" value="Transcription factor STAT-4 N-domain"/>
    <property type="match status" value="1"/>
</dbReference>
<dbReference type="PROSITE" id="PS50001">
    <property type="entry name" value="SH2"/>
    <property type="match status" value="1"/>
</dbReference>
<accession>Q764M5</accession>
<accession>A0A287BKW1</accession>
<name>STAT1_PIG</name>
<organism>
    <name type="scientific">Sus scrofa</name>
    <name type="common">Pig</name>
    <dbReference type="NCBI Taxonomy" id="9823"/>
    <lineage>
        <taxon>Eukaryota</taxon>
        <taxon>Metazoa</taxon>
        <taxon>Chordata</taxon>
        <taxon>Craniata</taxon>
        <taxon>Vertebrata</taxon>
        <taxon>Euteleostomi</taxon>
        <taxon>Mammalia</taxon>
        <taxon>Eutheria</taxon>
        <taxon>Laurasiatheria</taxon>
        <taxon>Artiodactyla</taxon>
        <taxon>Suina</taxon>
        <taxon>Suidae</taxon>
        <taxon>Sus</taxon>
    </lineage>
</organism>
<gene>
    <name type="primary">STAT1</name>
</gene>
<feature type="initiator methionine" description="Removed" evidence="1">
    <location>
        <position position="1"/>
    </location>
</feature>
<feature type="chain" id="PRO_0000182412" description="Signal transducer and activator of transcription 1">
    <location>
        <begin position="2"/>
        <end position="753"/>
    </location>
</feature>
<feature type="domain" description="SH2" evidence="3">
    <location>
        <begin position="573"/>
        <end position="670"/>
    </location>
</feature>
<feature type="coiled-coil region" evidence="1">
    <location>
        <begin position="136"/>
        <end position="317"/>
    </location>
</feature>
<feature type="site" description="Required for recruitment of EP300/p300" evidence="1">
    <location>
        <position position="724"/>
    </location>
</feature>
<feature type="modified residue" description="N-acetylserine" evidence="1">
    <location>
        <position position="2"/>
    </location>
</feature>
<feature type="modified residue" description="N6-methyllysine" evidence="1">
    <location>
        <position position="114"/>
    </location>
</feature>
<feature type="modified residue" description="N6-methyllysine" evidence="1">
    <location>
        <position position="175"/>
    </location>
</feature>
<feature type="modified residue" description="N6-methyllysine" evidence="1">
    <location>
        <position position="296"/>
    </location>
</feature>
<feature type="modified residue" description="N6-methyllysine" evidence="1">
    <location>
        <position position="366"/>
    </location>
</feature>
<feature type="modified residue" description="N6-methyllysine" evidence="1">
    <location>
        <position position="525"/>
    </location>
</feature>
<feature type="modified residue" description="N6-methyllysine" evidence="1">
    <location>
        <position position="637"/>
    </location>
</feature>
<feature type="modified residue" description="ADP-ribosyl glutamic acid" evidence="1">
    <location>
        <position position="657"/>
    </location>
</feature>
<feature type="modified residue" description="N6-methyllysine" evidence="1">
    <location>
        <position position="665"/>
    </location>
</feature>
<feature type="modified residue" description="Phosphotyrosine; by JAK1, JAK2 or TYK2" evidence="1">
    <location>
        <position position="701"/>
    </location>
</feature>
<feature type="modified residue" description="ADP-ribosyl glutamic acid" evidence="1">
    <location>
        <position position="705"/>
    </location>
</feature>
<feature type="modified residue" description="Phosphoserine; by IKKE" evidence="1">
    <location>
        <position position="708"/>
    </location>
</feature>
<feature type="modified residue" description="Phosphoserine; by MAPK14" evidence="1">
    <location>
        <position position="727"/>
    </location>
</feature>
<feature type="modified residue" description="Phosphothreonine" evidence="1">
    <location>
        <position position="749"/>
    </location>
</feature>
<feature type="cross-link" description="Glycyl lysine isopeptide (Lys-Gly) (interchain with G-Cter in SUMO1); alternate" evidence="1">
    <location>
        <position position="703"/>
    </location>
</feature>
<feature type="cross-link" description="Glycyl lysine isopeptide (Lys-Gly) (interchain with G-Cter in SUMO2); alternate" evidence="1">
    <location>
        <position position="703"/>
    </location>
</feature>
<feature type="sequence conflict" description="In Ref. 1; BAD06318." evidence="5" ref="1">
    <original>E</original>
    <variation>K</variation>
    <location>
        <position position="353"/>
    </location>
</feature>
<feature type="sequence conflict" description="In Ref. 1; BAD06318." evidence="5" ref="1">
    <original>MVSMTRGRS</original>
    <variation>VTWNKFSGTMNLD</variation>
    <location>
        <begin position="745"/>
        <end position="753"/>
    </location>
</feature>
<keyword id="KW-0007">Acetylation</keyword>
<keyword id="KW-0010">Activator</keyword>
<keyword id="KW-0013">ADP-ribosylation</keyword>
<keyword id="KW-0175">Coiled coil</keyword>
<keyword id="KW-0963">Cytoplasm</keyword>
<keyword id="KW-0238">DNA-binding</keyword>
<keyword id="KW-0945">Host-virus interaction</keyword>
<keyword id="KW-1017">Isopeptide bond</keyword>
<keyword id="KW-0488">Methylation</keyword>
<keyword id="KW-0539">Nucleus</keyword>
<keyword id="KW-0597">Phosphoprotein</keyword>
<keyword id="KW-1185">Reference proteome</keyword>
<keyword id="KW-0727">SH2 domain</keyword>
<keyword id="KW-0804">Transcription</keyword>
<keyword id="KW-0805">Transcription regulation</keyword>
<keyword id="KW-0832">Ubl conjugation</keyword>
<comment type="function">
    <text evidence="1 2">Signal transducer and transcription activator that mediates cellular responses to interferons (IFNs), cytokine KITLG/SCF and other cytokines and other growth factors. Following type I IFN (IFN-alpha and IFN-beta) binding to cell surface receptors, signaling via protein kinases leads to activation of Jak kinases (TYK2 and JAK1) and to tyrosine phosphorylation of STAT1 and STAT2. The phosphorylated STATs dimerize and associate with ISGF3G/IRF-9 to form a complex termed ISGF3 transcription factor, that enters the nucleus. ISGF3 binds to the IFN stimulated response element (ISRE) to activate the transcription of IFN-stimulated genes (ISG), which drive the cell in an antiviral state. In response to type II IFN (IFN-gamma), STAT1 is tyrosine- and serine-phosphorylated. It then forms a homodimer termed IFN-gamma-activated factor (GAF), migrates into the nucleus and binds to the IFN gamma activated sequence (GAS) to drive the expression of the target genes, inducing a cellular antiviral state. Becomes activated in response to KITLG/SCF and KIT signaling. May mediate cellular responses to activated FGFR1, FGFR2, FGFR3 and FGFR4. Following bacterial lipopolysaccharide (LPS)-induced TLR4 endocytosis, phosphorylated at Thr-749 by IKBKB which promotes binding of STAT1 to the 5'-TTTGAGGC-3' sequence in the ARID5A promoter, resulting in transcriptional activation of ARID5A and subsequent ARID5A-mediated stabilization of IL6. Phosphorylation at Thr-749 also promotes binding of STAT1 to the 5'-TTTGAGTC-3' sequence in the IL12B promoter and activation of IL12B transcription. Involved in food tolerance in small intestine: associates with the Gasdermin-D, p13 cleavage product (13 kDa GSDMD) and promotes transcription of CIITA, inducing type 1 regulatory T (Tr1) cells in upper small intestine.</text>
</comment>
<comment type="subunit">
    <text evidence="1 2">Homodimerizes upon IFN-gamma induced phosphorylation. Heterodimer with STAT2 upon IFN-alpha/beta induced phosphorylation. The heterodimer STAT1:STAT2 forms the interferon-stimulated gene factor 3 complex (ISGF3) with IRF9. Interacts (phosphorylated at Ser-727) with PIAS1; the interaction results in release of STAT1 from its target gene. Interacts with IFNAR1. Interacts with IFNAR2. Found in a complex with NMI and CREBBP/CBP. Interacts with NMI which is required for CREBBP/CBP recruitment to the complex. Interacts with PTK2/FAK1. Interacts with SRC. Interacts with ERBB4 (phosphorylated). Interacts with PARP9 and DTX3L independently of IFN-beta or IFN-gamma-mediated STAT1 'Tyr-701' phosphorylation. Interacts with histone acetyltransferase EP300/p300 in response to INF-gamma stimulation. Independently of its phosphorylation status, interacts with OTOP1. Interacts with IFNGR1 (By similarity). Interacts with STAT4 (By similarity).</text>
</comment>
<comment type="subunit">
    <text evidence="4">(Microbial infection) Interacts with African swine fever virus (ASFV) MGF360-9L; this interaction mediates degradation of STAT1 through apoptosis.</text>
</comment>
<comment type="subcellular location">
    <subcellularLocation>
        <location evidence="4">Cytoplasm</location>
    </subcellularLocation>
    <subcellularLocation>
        <location evidence="4">Nucleus</location>
    </subcellularLocation>
    <text evidence="1">Translocated into the nucleus upon tyrosine phosphorylation and dimerization, in response to IFN-gamma and signaling by activated FGFR1, FGFR2, FGFR3 or FGFR4. Monomethylation at Lys-525 is required for phosphorylation at Tyr-701 and translocation into the nucleus. Translocates into the nucleus in response to interferon-beta stimulation.</text>
</comment>
<comment type="PTM">
    <text evidence="1 2">Phosphorylated on tyrosine and serine residues in response to a variety of cytokines/growth hormones including IFN-alpha, IFN-gamma, PDGF and EGF. Activated KIT promotes phosphorylation on tyrosine residues and subsequent translocation to the nucleus. Upon EGF stimulation, phosphorylation on Tyr-701 (lacking in beta form) by JAK1, JAK2 or TYK2 promotes dimerization and subsequent translocation to the nucleus. Growth hormone (GH) activates STAT1 signaling only via JAK2. Tyrosine phosphorylated in response to constitutively activated FGFR1, FGFR2, FGFR3 and FGFR4. Phosphorylation on Ser-727 by several kinases including MAPK14, ERK1/2 and CAMK2/CAMKII in response to IFN-gamma stimulation, is required for maximal transcriptional activity. Phosphorylated on Ser-727 by CAMK2/CAMKII in response to IFN-gamma stimulation and calcium mobilization, promoting activity. Phosphorylated by CAMK2/CAMKII in response to IFN-beta stimulation and calcium mobilization in epithelial cells, promoting activity. Phosphorylation on Ser-727 promotes sumoylation though increasing interaction with PIAS. Phosphorylation on Ser-727 by PRKCD induces apoptosis in response to DNA-damaging agents. Phosphorylated on tyrosine residues when PTK2/FAK1 is activated; most likely this is catalyzed by a SRC family kinase. Dephosphorylation on tyrosine residues by PTPN2 negatively regulates interferon-mediated signaling. Upon viral infection or IFN induction, phosphorylation on Ser-708 occurs much later than phosphorylation on Tyr-701 and is required for the binding of ISGF3 on the ISREs of a subset of IFN-stimulated genes IKBKE-dependent. Phosphorylation at Tyr-701 and Ser-708 are mutually exclusive, phosphorylation at Ser-708 requires previous dephosphorylation of Tyr-701. Phosphorylation at Thr-749 by IKBKB/IKKB promotes transcriptional activation of ARID5A and IL12B by STAT1. Phosphorylation at Thr-749 restricts interferon signaling and anti-inflammatory responses and promotes innate inflammatory responses.</text>
</comment>
<comment type="PTM">
    <text evidence="1">Sumoylated with SUMO1, SUMO2 and SUMO3. Sumoylation is enhanced by IFN-gamma-induced phosphorylation on Ser-727, and by interaction with PIAS proteins. Enhances the transactivation activity.</text>
</comment>
<comment type="PTM">
    <text evidence="1">ISGylated.</text>
</comment>
<comment type="PTM">
    <text evidence="1">Mono-ADP-ribosylated at Glu-657 and Glu-705 by PARP14; ADP-ribosylation prevents phosphorylation at Tyr-701. However, the role of ADP-ribosylation in the prevention of phosphorylation has been called into question and the lack of phosphorylation may be due to sumoylation of Lys-703.</text>
</comment>
<comment type="PTM">
    <text evidence="1">Monomethylated at Lys-525 by SETD2; monomethylation is necessary for phosphorylation at Tyr-701, translocation into the nucleus and activation of the antiviral defense.</text>
</comment>
<comment type="PTM">
    <text evidence="1">Deubiquitinated by USP13; leading to STAT1 stabilization and positive regulation of type I and type II IFN signalings.</text>
</comment>
<comment type="similarity">
    <text evidence="5">Belongs to the transcription factor STAT family.</text>
</comment>
<comment type="caution">
    <text evidence="1">Has been shown to be mono-ADP-ribosylated at Glu-657 and Glu-705 by PARP14 which prevents phosphorylation at Tyr-701 (By similarity). However, the role of ADP-ribosylation in the prevention of phosphorylation has been called into question (By similarity). It has been suggested that the lack of phosphorylation may be due to sumoylation of Lys-703 (By similarity).</text>
</comment>